<dbReference type="EC" id="1.3.98.5" evidence="1"/>
<dbReference type="EMBL" id="BA000028">
    <property type="protein sequence ID" value="BAC14979.1"/>
    <property type="molecule type" value="Genomic_DNA"/>
</dbReference>
<dbReference type="RefSeq" id="WP_011067419.1">
    <property type="nucleotide sequence ID" value="NC_004193.1"/>
</dbReference>
<dbReference type="SMR" id="Q8EM37"/>
<dbReference type="STRING" id="221109.gene:10735275"/>
<dbReference type="KEGG" id="oih:OB3023"/>
<dbReference type="eggNOG" id="COG3253">
    <property type="taxonomic scope" value="Bacteria"/>
</dbReference>
<dbReference type="HOGENOM" id="CLU_063226_1_0_9"/>
<dbReference type="OrthoDB" id="9773646at2"/>
<dbReference type="PhylomeDB" id="Q8EM37"/>
<dbReference type="UniPathway" id="UPA00252"/>
<dbReference type="Proteomes" id="UP000000822">
    <property type="component" value="Chromosome"/>
</dbReference>
<dbReference type="GO" id="GO:0020037">
    <property type="term" value="F:heme binding"/>
    <property type="evidence" value="ECO:0007669"/>
    <property type="project" value="InterPro"/>
</dbReference>
<dbReference type="GO" id="GO:0046872">
    <property type="term" value="F:metal ion binding"/>
    <property type="evidence" value="ECO:0007669"/>
    <property type="project" value="UniProtKB-KW"/>
</dbReference>
<dbReference type="GO" id="GO:0016634">
    <property type="term" value="F:oxidoreductase activity, acting on the CH-CH group of donors, oxygen as acceptor"/>
    <property type="evidence" value="ECO:0007669"/>
    <property type="project" value="UniProtKB-UniRule"/>
</dbReference>
<dbReference type="GO" id="GO:0004601">
    <property type="term" value="F:peroxidase activity"/>
    <property type="evidence" value="ECO:0007669"/>
    <property type="project" value="InterPro"/>
</dbReference>
<dbReference type="GO" id="GO:0006785">
    <property type="term" value="P:heme B biosynthetic process"/>
    <property type="evidence" value="ECO:0007669"/>
    <property type="project" value="UniProtKB-UniRule"/>
</dbReference>
<dbReference type="Gene3D" id="3.30.70.1030">
    <property type="entry name" value="Apc35880, domain 1"/>
    <property type="match status" value="2"/>
</dbReference>
<dbReference type="HAMAP" id="MF_01442">
    <property type="entry name" value="Coproheme_decarbox_1"/>
    <property type="match status" value="1"/>
</dbReference>
<dbReference type="InterPro" id="IPR031332">
    <property type="entry name" value="CHDC"/>
</dbReference>
<dbReference type="InterPro" id="IPR010644">
    <property type="entry name" value="ChdC/CLD"/>
</dbReference>
<dbReference type="InterPro" id="IPR011008">
    <property type="entry name" value="Dimeric_a/b-barrel"/>
</dbReference>
<dbReference type="NCBIfam" id="NF008913">
    <property type="entry name" value="PRK12276.1"/>
    <property type="match status" value="1"/>
</dbReference>
<dbReference type="PANTHER" id="PTHR36843:SF1">
    <property type="entry name" value="COPROHEME DECARBOXYLASE"/>
    <property type="match status" value="1"/>
</dbReference>
<dbReference type="PANTHER" id="PTHR36843">
    <property type="entry name" value="HEME-DEPENDENT PEROXIDASE YWFI-RELATED"/>
    <property type="match status" value="1"/>
</dbReference>
<dbReference type="Pfam" id="PF06778">
    <property type="entry name" value="Chlor_dismutase"/>
    <property type="match status" value="1"/>
</dbReference>
<dbReference type="SUPFAM" id="SSF54909">
    <property type="entry name" value="Dimeric alpha+beta barrel"/>
    <property type="match status" value="1"/>
</dbReference>
<comment type="function">
    <text evidence="1">Involved in coproporphyrin-dependent heme b biosynthesis. Catalyzes the decarboxylation of Fe-coproporphyrin III (coproheme) to heme b (protoheme IX), the last step of the pathway. The reaction occurs in a stepwise manner with a three-propionate intermediate.</text>
</comment>
<comment type="catalytic activity">
    <reaction evidence="1">
        <text>Fe-coproporphyrin III + 2 H2O2 + 2 H(+) = heme b + 2 CO2 + 4 H2O</text>
        <dbReference type="Rhea" id="RHEA:56516"/>
        <dbReference type="ChEBI" id="CHEBI:15377"/>
        <dbReference type="ChEBI" id="CHEBI:15378"/>
        <dbReference type="ChEBI" id="CHEBI:16240"/>
        <dbReference type="ChEBI" id="CHEBI:16526"/>
        <dbReference type="ChEBI" id="CHEBI:60344"/>
        <dbReference type="ChEBI" id="CHEBI:68438"/>
        <dbReference type="EC" id="1.3.98.5"/>
    </reaction>
    <physiologicalReaction direction="left-to-right" evidence="1">
        <dbReference type="Rhea" id="RHEA:56517"/>
    </physiologicalReaction>
</comment>
<comment type="catalytic activity">
    <reaction evidence="1">
        <text>Fe-coproporphyrin III + H2O2 + H(+) = harderoheme III + CO2 + 2 H2O</text>
        <dbReference type="Rhea" id="RHEA:57940"/>
        <dbReference type="ChEBI" id="CHEBI:15377"/>
        <dbReference type="ChEBI" id="CHEBI:15378"/>
        <dbReference type="ChEBI" id="CHEBI:16240"/>
        <dbReference type="ChEBI" id="CHEBI:16526"/>
        <dbReference type="ChEBI" id="CHEBI:68438"/>
        <dbReference type="ChEBI" id="CHEBI:142463"/>
    </reaction>
    <physiologicalReaction direction="left-to-right" evidence="1">
        <dbReference type="Rhea" id="RHEA:57941"/>
    </physiologicalReaction>
</comment>
<comment type="catalytic activity">
    <reaction evidence="1">
        <text>harderoheme III + H2O2 + H(+) = heme b + CO2 + 2 H2O</text>
        <dbReference type="Rhea" id="RHEA:57944"/>
        <dbReference type="ChEBI" id="CHEBI:15377"/>
        <dbReference type="ChEBI" id="CHEBI:15378"/>
        <dbReference type="ChEBI" id="CHEBI:16240"/>
        <dbReference type="ChEBI" id="CHEBI:16526"/>
        <dbReference type="ChEBI" id="CHEBI:60344"/>
        <dbReference type="ChEBI" id="CHEBI:142463"/>
    </reaction>
    <physiologicalReaction direction="left-to-right" evidence="1">
        <dbReference type="Rhea" id="RHEA:57945"/>
    </physiologicalReaction>
</comment>
<comment type="cofactor">
    <cofactor evidence="1">
        <name>Fe-coproporphyrin III</name>
        <dbReference type="ChEBI" id="CHEBI:68438"/>
    </cofactor>
    <text evidence="1">Fe-coproporphyrin III acts both as a substrate and a redox cofactor.</text>
</comment>
<comment type="pathway">
    <text evidence="1">Porphyrin-containing compound metabolism; protoheme biosynthesis.</text>
</comment>
<comment type="similarity">
    <text evidence="1">Belongs to the ChdC family. Type 1 subfamily.</text>
</comment>
<feature type="chain" id="PRO_0000294044" description="Coproheme decarboxylase">
    <location>
        <begin position="1"/>
        <end position="249"/>
    </location>
</feature>
<feature type="active site" evidence="1">
    <location>
        <position position="145"/>
    </location>
</feature>
<feature type="binding site" evidence="1">
    <location>
        <begin position="145"/>
        <end position="149"/>
    </location>
    <ligand>
        <name>Fe-coproporphyrin III</name>
        <dbReference type="ChEBI" id="CHEBI:68438"/>
    </ligand>
</feature>
<feature type="binding site" description="axial binding residue" evidence="1">
    <location>
        <position position="172"/>
    </location>
    <ligand>
        <name>Fe-coproporphyrin III</name>
        <dbReference type="ChEBI" id="CHEBI:68438"/>
    </ligand>
    <ligandPart>
        <name>Fe</name>
        <dbReference type="ChEBI" id="CHEBI:18248"/>
    </ligandPart>
</feature>
<proteinExistence type="inferred from homology"/>
<gene>
    <name evidence="1" type="primary">chdC</name>
    <name type="ordered locus">OB3023</name>
</gene>
<name>CHDC_OCEIH</name>
<accession>Q8EM37</accession>
<sequence>MAEAVVTVDGWSALHDTRQFDWTSWKLISKEERQAAIDEFQQLISKWEAVEEEKQGSHGIYKVVGNKADFMFIFLRESFQELEQIKTEINKTKLGDFLIPGYSYVSIIEKTMHDPMKAGEDRELSAYVKEALKPTMPKWEHACFYPMARRRDPGVNWFEIEKEERTKLLYEHGMTGRKYAGKVKEIITGSIGLDEWEWGVTLFAHDPLQFKKIVYEMRFDEVTTKYAEFGDFIVGNFLEKEELSNHLSI</sequence>
<organism>
    <name type="scientific">Oceanobacillus iheyensis (strain DSM 14371 / CIP 107618 / JCM 11309 / KCTC 3954 / HTE831)</name>
    <dbReference type="NCBI Taxonomy" id="221109"/>
    <lineage>
        <taxon>Bacteria</taxon>
        <taxon>Bacillati</taxon>
        <taxon>Bacillota</taxon>
        <taxon>Bacilli</taxon>
        <taxon>Bacillales</taxon>
        <taxon>Bacillaceae</taxon>
        <taxon>Oceanobacillus</taxon>
    </lineage>
</organism>
<keyword id="KW-0349">Heme</keyword>
<keyword id="KW-0350">Heme biosynthesis</keyword>
<keyword id="KW-0408">Iron</keyword>
<keyword id="KW-0479">Metal-binding</keyword>
<keyword id="KW-0560">Oxidoreductase</keyword>
<keyword id="KW-1185">Reference proteome</keyword>
<evidence type="ECO:0000255" key="1">
    <source>
        <dbReference type="HAMAP-Rule" id="MF_01442"/>
    </source>
</evidence>
<protein>
    <recommendedName>
        <fullName evidence="1">Coproheme decarboxylase</fullName>
        <ecNumber evidence="1">1.3.98.5</ecNumber>
    </recommendedName>
    <alternativeName>
        <fullName evidence="1">Coproheme III oxidative decarboxylase</fullName>
    </alternativeName>
    <alternativeName>
        <fullName evidence="1">Hydrogen peroxide-dependent heme synthase</fullName>
    </alternativeName>
</protein>
<reference key="1">
    <citation type="journal article" date="2002" name="Nucleic Acids Res.">
        <title>Genome sequence of Oceanobacillus iheyensis isolated from the Iheya Ridge and its unexpected adaptive capabilities to extreme environments.</title>
        <authorList>
            <person name="Takami H."/>
            <person name="Takaki Y."/>
            <person name="Uchiyama I."/>
        </authorList>
    </citation>
    <scope>NUCLEOTIDE SEQUENCE [LARGE SCALE GENOMIC DNA]</scope>
    <source>
        <strain>DSM 14371 / CIP 107618 / JCM 11309 / KCTC 3954 / HTE831</strain>
    </source>
</reference>